<proteinExistence type="inferred from homology"/>
<dbReference type="EMBL" id="CP001614">
    <property type="protein sequence ID" value="ACR14791.1"/>
    <property type="molecule type" value="Genomic_DNA"/>
</dbReference>
<dbReference type="RefSeq" id="WP_015820905.1">
    <property type="nucleotide sequence ID" value="NC_012997.1"/>
</dbReference>
<dbReference type="SMR" id="C5BQT5"/>
<dbReference type="STRING" id="377629.TERTU_3435"/>
<dbReference type="KEGG" id="ttu:TERTU_3435"/>
<dbReference type="eggNOG" id="COG0632">
    <property type="taxonomic scope" value="Bacteria"/>
</dbReference>
<dbReference type="HOGENOM" id="CLU_087936_0_0_6"/>
<dbReference type="OrthoDB" id="5293449at2"/>
<dbReference type="Proteomes" id="UP000009080">
    <property type="component" value="Chromosome"/>
</dbReference>
<dbReference type="GO" id="GO:0005737">
    <property type="term" value="C:cytoplasm"/>
    <property type="evidence" value="ECO:0007669"/>
    <property type="project" value="UniProtKB-SubCell"/>
</dbReference>
<dbReference type="GO" id="GO:0009379">
    <property type="term" value="C:Holliday junction helicase complex"/>
    <property type="evidence" value="ECO:0007669"/>
    <property type="project" value="InterPro"/>
</dbReference>
<dbReference type="GO" id="GO:0048476">
    <property type="term" value="C:Holliday junction resolvase complex"/>
    <property type="evidence" value="ECO:0007669"/>
    <property type="project" value="UniProtKB-UniRule"/>
</dbReference>
<dbReference type="GO" id="GO:0005524">
    <property type="term" value="F:ATP binding"/>
    <property type="evidence" value="ECO:0007669"/>
    <property type="project" value="InterPro"/>
</dbReference>
<dbReference type="GO" id="GO:0000400">
    <property type="term" value="F:four-way junction DNA binding"/>
    <property type="evidence" value="ECO:0007669"/>
    <property type="project" value="UniProtKB-UniRule"/>
</dbReference>
<dbReference type="GO" id="GO:0009378">
    <property type="term" value="F:four-way junction helicase activity"/>
    <property type="evidence" value="ECO:0007669"/>
    <property type="project" value="InterPro"/>
</dbReference>
<dbReference type="GO" id="GO:0006310">
    <property type="term" value="P:DNA recombination"/>
    <property type="evidence" value="ECO:0007669"/>
    <property type="project" value="UniProtKB-UniRule"/>
</dbReference>
<dbReference type="GO" id="GO:0006281">
    <property type="term" value="P:DNA repair"/>
    <property type="evidence" value="ECO:0007669"/>
    <property type="project" value="UniProtKB-UniRule"/>
</dbReference>
<dbReference type="CDD" id="cd14332">
    <property type="entry name" value="UBA_RuvA_C"/>
    <property type="match status" value="1"/>
</dbReference>
<dbReference type="Gene3D" id="1.10.150.20">
    <property type="entry name" value="5' to 3' exonuclease, C-terminal subdomain"/>
    <property type="match status" value="1"/>
</dbReference>
<dbReference type="Gene3D" id="1.10.8.10">
    <property type="entry name" value="DNA helicase RuvA subunit, C-terminal domain"/>
    <property type="match status" value="1"/>
</dbReference>
<dbReference type="Gene3D" id="2.40.50.140">
    <property type="entry name" value="Nucleic acid-binding proteins"/>
    <property type="match status" value="1"/>
</dbReference>
<dbReference type="HAMAP" id="MF_00031">
    <property type="entry name" value="DNA_HJ_migration_RuvA"/>
    <property type="match status" value="1"/>
</dbReference>
<dbReference type="InterPro" id="IPR013849">
    <property type="entry name" value="DNA_helicase_Holl-junc_RuvA_I"/>
</dbReference>
<dbReference type="InterPro" id="IPR003583">
    <property type="entry name" value="Hlx-hairpin-Hlx_DNA-bd_motif"/>
</dbReference>
<dbReference type="InterPro" id="IPR012340">
    <property type="entry name" value="NA-bd_OB-fold"/>
</dbReference>
<dbReference type="InterPro" id="IPR000085">
    <property type="entry name" value="RuvA"/>
</dbReference>
<dbReference type="InterPro" id="IPR010994">
    <property type="entry name" value="RuvA_2-like"/>
</dbReference>
<dbReference type="InterPro" id="IPR011114">
    <property type="entry name" value="RuvA_C"/>
</dbReference>
<dbReference type="InterPro" id="IPR036267">
    <property type="entry name" value="RuvA_C_sf"/>
</dbReference>
<dbReference type="NCBIfam" id="TIGR00084">
    <property type="entry name" value="ruvA"/>
    <property type="match status" value="1"/>
</dbReference>
<dbReference type="Pfam" id="PF14520">
    <property type="entry name" value="HHH_5"/>
    <property type="match status" value="1"/>
</dbReference>
<dbReference type="Pfam" id="PF07499">
    <property type="entry name" value="RuvA_C"/>
    <property type="match status" value="1"/>
</dbReference>
<dbReference type="Pfam" id="PF01330">
    <property type="entry name" value="RuvA_N"/>
    <property type="match status" value="1"/>
</dbReference>
<dbReference type="SMART" id="SM00278">
    <property type="entry name" value="HhH1"/>
    <property type="match status" value="2"/>
</dbReference>
<dbReference type="SUPFAM" id="SSF46929">
    <property type="entry name" value="DNA helicase RuvA subunit, C-terminal domain"/>
    <property type="match status" value="1"/>
</dbReference>
<dbReference type="SUPFAM" id="SSF50249">
    <property type="entry name" value="Nucleic acid-binding proteins"/>
    <property type="match status" value="1"/>
</dbReference>
<dbReference type="SUPFAM" id="SSF47781">
    <property type="entry name" value="RuvA domain 2-like"/>
    <property type="match status" value="1"/>
</dbReference>
<name>RUVA_TERTT</name>
<evidence type="ECO:0000255" key="1">
    <source>
        <dbReference type="HAMAP-Rule" id="MF_00031"/>
    </source>
</evidence>
<gene>
    <name evidence="1" type="primary">ruvA</name>
    <name type="ordered locus">TERTU_3435</name>
</gene>
<protein>
    <recommendedName>
        <fullName evidence="1">Holliday junction branch migration complex subunit RuvA</fullName>
    </recommendedName>
</protein>
<accession>C5BQT5</accession>
<comment type="function">
    <text evidence="1">The RuvA-RuvB-RuvC complex processes Holliday junction (HJ) DNA during genetic recombination and DNA repair, while the RuvA-RuvB complex plays an important role in the rescue of blocked DNA replication forks via replication fork reversal (RFR). RuvA specifically binds to HJ cruciform DNA, conferring on it an open structure. The RuvB hexamer acts as an ATP-dependent pump, pulling dsDNA into and through the RuvAB complex. HJ branch migration allows RuvC to scan DNA until it finds its consensus sequence, where it cleaves and resolves the cruciform DNA.</text>
</comment>
<comment type="subunit">
    <text evidence="1">Homotetramer. Forms an RuvA(8)-RuvB(12)-Holliday junction (HJ) complex. HJ DNA is sandwiched between 2 RuvA tetramers; dsDNA enters through RuvA and exits via RuvB. An RuvB hexamer assembles on each DNA strand where it exits the tetramer. Each RuvB hexamer is contacted by two RuvA subunits (via domain III) on 2 adjacent RuvB subunits; this complex drives branch migration. In the full resolvosome a probable DNA-RuvA(4)-RuvB(12)-RuvC(2) complex forms which resolves the HJ.</text>
</comment>
<comment type="subcellular location">
    <subcellularLocation>
        <location evidence="1">Cytoplasm</location>
    </subcellularLocation>
</comment>
<comment type="domain">
    <text evidence="1">Has three domains with a flexible linker between the domains II and III and assumes an 'L' shape. Domain III is highly mobile and contacts RuvB.</text>
</comment>
<comment type="similarity">
    <text evidence="1">Belongs to the RuvA family.</text>
</comment>
<sequence>MIGRLTGNLVVKQAPNLMVDINGVGYDLLAPMSTFYQLPELDAKVVLHTHFAVSETSQQLFGFIDQQDREFFRMLIKVNGVGPKMAVGIMSMETNDIVRCILEDNLNALVKVPGVGKKTAERLIIEMRDKLKSWQVTPSVDATGSLVALDSAAPSQNAIVAEAESALVALGYKPVEASKAVARVTSDEITRSEDLIRLALRNMIPA</sequence>
<organism>
    <name type="scientific">Teredinibacter turnerae (strain ATCC 39867 / T7901)</name>
    <dbReference type="NCBI Taxonomy" id="377629"/>
    <lineage>
        <taxon>Bacteria</taxon>
        <taxon>Pseudomonadati</taxon>
        <taxon>Pseudomonadota</taxon>
        <taxon>Gammaproteobacteria</taxon>
        <taxon>Cellvibrionales</taxon>
        <taxon>Cellvibrionaceae</taxon>
        <taxon>Teredinibacter</taxon>
    </lineage>
</organism>
<feature type="chain" id="PRO_1000202004" description="Holliday junction branch migration complex subunit RuvA">
    <location>
        <begin position="1"/>
        <end position="206"/>
    </location>
</feature>
<feature type="region of interest" description="Domain I" evidence="1">
    <location>
        <begin position="1"/>
        <end position="64"/>
    </location>
</feature>
<feature type="region of interest" description="Domain II" evidence="1">
    <location>
        <begin position="65"/>
        <end position="142"/>
    </location>
</feature>
<feature type="region of interest" description="Flexible linker" evidence="1">
    <location>
        <begin position="143"/>
        <end position="154"/>
    </location>
</feature>
<feature type="region of interest" description="Domain III" evidence="1">
    <location>
        <begin position="155"/>
        <end position="206"/>
    </location>
</feature>
<keyword id="KW-0963">Cytoplasm</keyword>
<keyword id="KW-0227">DNA damage</keyword>
<keyword id="KW-0233">DNA recombination</keyword>
<keyword id="KW-0234">DNA repair</keyword>
<keyword id="KW-0238">DNA-binding</keyword>
<keyword id="KW-1185">Reference proteome</keyword>
<reference key="1">
    <citation type="journal article" date="2009" name="PLoS ONE">
        <title>The complete genome of Teredinibacter turnerae T7901: an intracellular endosymbiont of marine wood-boring bivalves (shipworms).</title>
        <authorList>
            <person name="Yang J.C."/>
            <person name="Madupu R."/>
            <person name="Durkin A.S."/>
            <person name="Ekborg N.A."/>
            <person name="Pedamallu C.S."/>
            <person name="Hostetler J.B."/>
            <person name="Radune D."/>
            <person name="Toms B.S."/>
            <person name="Henrissat B."/>
            <person name="Coutinho P.M."/>
            <person name="Schwarz S."/>
            <person name="Field L."/>
            <person name="Trindade-Silva A.E."/>
            <person name="Soares C.A.G."/>
            <person name="Elshahawi S."/>
            <person name="Hanora A."/>
            <person name="Schmidt E.W."/>
            <person name="Haygood M.G."/>
            <person name="Posfai J."/>
            <person name="Benner J."/>
            <person name="Madinger C."/>
            <person name="Nove J."/>
            <person name="Anton B."/>
            <person name="Chaudhary K."/>
            <person name="Foster J."/>
            <person name="Holman A."/>
            <person name="Kumar S."/>
            <person name="Lessard P.A."/>
            <person name="Luyten Y.A."/>
            <person name="Slatko B."/>
            <person name="Wood N."/>
            <person name="Wu B."/>
            <person name="Teplitski M."/>
            <person name="Mougous J.D."/>
            <person name="Ward N."/>
            <person name="Eisen J.A."/>
            <person name="Badger J.H."/>
            <person name="Distel D.L."/>
        </authorList>
    </citation>
    <scope>NUCLEOTIDE SEQUENCE [LARGE SCALE GENOMIC DNA]</scope>
    <source>
        <strain>ATCC 39867 / T7901</strain>
    </source>
</reference>